<keyword id="KW-0025">Alternative splicing</keyword>
<keyword id="KW-0256">Endoplasmic reticulum</keyword>
<keyword id="KW-0931">ER-Golgi transport</keyword>
<keyword id="KW-0472">Membrane</keyword>
<keyword id="KW-0653">Protein transport</keyword>
<keyword id="KW-1267">Proteomics identification</keyword>
<keyword id="KW-1185">Reference proteome</keyword>
<keyword id="KW-0812">Transmembrane</keyword>
<keyword id="KW-1133">Transmembrane helix</keyword>
<keyword id="KW-0813">Transport</keyword>
<reference key="1">
    <citation type="journal article" date="1998" name="Biochem. Biophys. Res. Commun.">
        <title>Hsec22c: a homolog of yeast Sec22p and mammalian rsec22a and msec22b/ERS-24.</title>
        <authorList>
            <person name="Tang B.L."/>
            <person name="Low D.Y."/>
            <person name="Hong W."/>
        </authorList>
    </citation>
    <scope>NUCLEOTIDE SEQUENCE [MRNA] (ISOFORM 2)</scope>
    <scope>FUNCTION</scope>
    <scope>SUBCELLULAR LOCATION</scope>
    <scope>TISSUE SPECIFICITY</scope>
</reference>
<reference key="2">
    <citation type="journal article" date="2004" name="Nat. Genet.">
        <title>Complete sequencing and characterization of 21,243 full-length human cDNAs.</title>
        <authorList>
            <person name="Ota T."/>
            <person name="Suzuki Y."/>
            <person name="Nishikawa T."/>
            <person name="Otsuki T."/>
            <person name="Sugiyama T."/>
            <person name="Irie R."/>
            <person name="Wakamatsu A."/>
            <person name="Hayashi K."/>
            <person name="Sato H."/>
            <person name="Nagai K."/>
            <person name="Kimura K."/>
            <person name="Makita H."/>
            <person name="Sekine M."/>
            <person name="Obayashi M."/>
            <person name="Nishi T."/>
            <person name="Shibahara T."/>
            <person name="Tanaka T."/>
            <person name="Ishii S."/>
            <person name="Yamamoto J."/>
            <person name="Saito K."/>
            <person name="Kawai Y."/>
            <person name="Isono Y."/>
            <person name="Nakamura Y."/>
            <person name="Nagahari K."/>
            <person name="Murakami K."/>
            <person name="Yasuda T."/>
            <person name="Iwayanagi T."/>
            <person name="Wagatsuma M."/>
            <person name="Shiratori A."/>
            <person name="Sudo H."/>
            <person name="Hosoiri T."/>
            <person name="Kaku Y."/>
            <person name="Kodaira H."/>
            <person name="Kondo H."/>
            <person name="Sugawara M."/>
            <person name="Takahashi M."/>
            <person name="Kanda K."/>
            <person name="Yokoi T."/>
            <person name="Furuya T."/>
            <person name="Kikkawa E."/>
            <person name="Omura Y."/>
            <person name="Abe K."/>
            <person name="Kamihara K."/>
            <person name="Katsuta N."/>
            <person name="Sato K."/>
            <person name="Tanikawa M."/>
            <person name="Yamazaki M."/>
            <person name="Ninomiya K."/>
            <person name="Ishibashi T."/>
            <person name="Yamashita H."/>
            <person name="Murakawa K."/>
            <person name="Fujimori K."/>
            <person name="Tanai H."/>
            <person name="Kimata M."/>
            <person name="Watanabe M."/>
            <person name="Hiraoka S."/>
            <person name="Chiba Y."/>
            <person name="Ishida S."/>
            <person name="Ono Y."/>
            <person name="Takiguchi S."/>
            <person name="Watanabe S."/>
            <person name="Yosida M."/>
            <person name="Hotuta T."/>
            <person name="Kusano J."/>
            <person name="Kanehori K."/>
            <person name="Takahashi-Fujii A."/>
            <person name="Hara H."/>
            <person name="Tanase T.-O."/>
            <person name="Nomura Y."/>
            <person name="Togiya S."/>
            <person name="Komai F."/>
            <person name="Hara R."/>
            <person name="Takeuchi K."/>
            <person name="Arita M."/>
            <person name="Imose N."/>
            <person name="Musashino K."/>
            <person name="Yuuki H."/>
            <person name="Oshima A."/>
            <person name="Sasaki N."/>
            <person name="Aotsuka S."/>
            <person name="Yoshikawa Y."/>
            <person name="Matsunawa H."/>
            <person name="Ichihara T."/>
            <person name="Shiohata N."/>
            <person name="Sano S."/>
            <person name="Moriya S."/>
            <person name="Momiyama H."/>
            <person name="Satoh N."/>
            <person name="Takami S."/>
            <person name="Terashima Y."/>
            <person name="Suzuki O."/>
            <person name="Nakagawa S."/>
            <person name="Senoh A."/>
            <person name="Mizoguchi H."/>
            <person name="Goto Y."/>
            <person name="Shimizu F."/>
            <person name="Wakebe H."/>
            <person name="Hishigaki H."/>
            <person name="Watanabe T."/>
            <person name="Sugiyama A."/>
            <person name="Takemoto M."/>
            <person name="Kawakami B."/>
            <person name="Yamazaki M."/>
            <person name="Watanabe K."/>
            <person name="Kumagai A."/>
            <person name="Itakura S."/>
            <person name="Fukuzumi Y."/>
            <person name="Fujimori Y."/>
            <person name="Komiyama M."/>
            <person name="Tashiro H."/>
            <person name="Tanigami A."/>
            <person name="Fujiwara T."/>
            <person name="Ono T."/>
            <person name="Yamada K."/>
            <person name="Fujii Y."/>
            <person name="Ozaki K."/>
            <person name="Hirao M."/>
            <person name="Ohmori Y."/>
            <person name="Kawabata A."/>
            <person name="Hikiji T."/>
            <person name="Kobatake N."/>
            <person name="Inagaki H."/>
            <person name="Ikema Y."/>
            <person name="Okamoto S."/>
            <person name="Okitani R."/>
            <person name="Kawakami T."/>
            <person name="Noguchi S."/>
            <person name="Itoh T."/>
            <person name="Shigeta K."/>
            <person name="Senba T."/>
            <person name="Matsumura K."/>
            <person name="Nakajima Y."/>
            <person name="Mizuno T."/>
            <person name="Morinaga M."/>
            <person name="Sasaki M."/>
            <person name="Togashi T."/>
            <person name="Oyama M."/>
            <person name="Hata H."/>
            <person name="Watanabe M."/>
            <person name="Komatsu T."/>
            <person name="Mizushima-Sugano J."/>
            <person name="Satoh T."/>
            <person name="Shirai Y."/>
            <person name="Takahashi Y."/>
            <person name="Nakagawa K."/>
            <person name="Okumura K."/>
            <person name="Nagase T."/>
            <person name="Nomura N."/>
            <person name="Kikuchi H."/>
            <person name="Masuho Y."/>
            <person name="Yamashita R."/>
            <person name="Nakai K."/>
            <person name="Yada T."/>
            <person name="Nakamura Y."/>
            <person name="Ohara O."/>
            <person name="Isogai T."/>
            <person name="Sugano S."/>
        </authorList>
    </citation>
    <scope>NUCLEOTIDE SEQUENCE [LARGE SCALE MRNA] (ISOFORM 1)</scope>
    <source>
        <tissue>Trachea</tissue>
    </source>
</reference>
<reference key="3">
    <citation type="journal article" date="2003" name="Genome Res.">
        <title>The secreted protein discovery initiative (SPDI), a large-scale effort to identify novel human secreted and transmembrane proteins: a bioinformatics assessment.</title>
        <authorList>
            <person name="Clark H.F."/>
            <person name="Gurney A.L."/>
            <person name="Abaya E."/>
            <person name="Baker K."/>
            <person name="Baldwin D.T."/>
            <person name="Brush J."/>
            <person name="Chen J."/>
            <person name="Chow B."/>
            <person name="Chui C."/>
            <person name="Crowley C."/>
            <person name="Currell B."/>
            <person name="Deuel B."/>
            <person name="Dowd P."/>
            <person name="Eaton D."/>
            <person name="Foster J.S."/>
            <person name="Grimaldi C."/>
            <person name="Gu Q."/>
            <person name="Hass P.E."/>
            <person name="Heldens S."/>
            <person name="Huang A."/>
            <person name="Kim H.S."/>
            <person name="Klimowski L."/>
            <person name="Jin Y."/>
            <person name="Johnson S."/>
            <person name="Lee J."/>
            <person name="Lewis L."/>
            <person name="Liao D."/>
            <person name="Mark M.R."/>
            <person name="Robbie E."/>
            <person name="Sanchez C."/>
            <person name="Schoenfeld J."/>
            <person name="Seshagiri S."/>
            <person name="Simmons L."/>
            <person name="Singh J."/>
            <person name="Smith V."/>
            <person name="Stinson J."/>
            <person name="Vagts A."/>
            <person name="Vandlen R.L."/>
            <person name="Watanabe C."/>
            <person name="Wieand D."/>
            <person name="Woods K."/>
            <person name="Xie M.-H."/>
            <person name="Yansura D.G."/>
            <person name="Yi S."/>
            <person name="Yu G."/>
            <person name="Yuan J."/>
            <person name="Zhang M."/>
            <person name="Zhang Z."/>
            <person name="Goddard A.D."/>
            <person name="Wood W.I."/>
            <person name="Godowski P.J."/>
            <person name="Gray A.M."/>
        </authorList>
    </citation>
    <scope>NUCLEOTIDE SEQUENCE [LARGE SCALE MRNA] (ISOFORM 3)</scope>
</reference>
<reference key="4">
    <citation type="submission" date="2005-07" db="EMBL/GenBank/DDBJ databases">
        <authorList>
            <person name="Mural R.J."/>
            <person name="Istrail S."/>
            <person name="Sutton G.G."/>
            <person name="Florea L."/>
            <person name="Halpern A.L."/>
            <person name="Mobarry C.M."/>
            <person name="Lippert R."/>
            <person name="Walenz B."/>
            <person name="Shatkay H."/>
            <person name="Dew I."/>
            <person name="Miller J.R."/>
            <person name="Flanigan M.J."/>
            <person name="Edwards N.J."/>
            <person name="Bolanos R."/>
            <person name="Fasulo D."/>
            <person name="Halldorsson B.V."/>
            <person name="Hannenhalli S."/>
            <person name="Turner R."/>
            <person name="Yooseph S."/>
            <person name="Lu F."/>
            <person name="Nusskern D.R."/>
            <person name="Shue B.C."/>
            <person name="Zheng X.H."/>
            <person name="Zhong F."/>
            <person name="Delcher A.L."/>
            <person name="Huson D.H."/>
            <person name="Kravitz S.A."/>
            <person name="Mouchard L."/>
            <person name="Reinert K."/>
            <person name="Remington K.A."/>
            <person name="Clark A.G."/>
            <person name="Waterman M.S."/>
            <person name="Eichler E.E."/>
            <person name="Adams M.D."/>
            <person name="Hunkapiller M.W."/>
            <person name="Myers E.W."/>
            <person name="Venter J.C."/>
        </authorList>
    </citation>
    <scope>NUCLEOTIDE SEQUENCE [LARGE SCALE GENOMIC DNA]</scope>
</reference>
<reference key="5">
    <citation type="journal article" date="2004" name="Genome Res.">
        <title>The status, quality, and expansion of the NIH full-length cDNA project: the Mammalian Gene Collection (MGC).</title>
        <authorList>
            <consortium name="The MGC Project Team"/>
        </authorList>
    </citation>
    <scope>NUCLEOTIDE SEQUENCE [LARGE SCALE MRNA] (ISOFORMS 1 AND 2)</scope>
    <source>
        <tissue>B-cell</tissue>
    </source>
</reference>
<reference key="6">
    <citation type="journal article" date="2007" name="BMC Genomics">
        <title>The full-ORF clone resource of the German cDNA consortium.</title>
        <authorList>
            <person name="Bechtel S."/>
            <person name="Rosenfelder H."/>
            <person name="Duda A."/>
            <person name="Schmidt C.P."/>
            <person name="Ernst U."/>
            <person name="Wellenreuther R."/>
            <person name="Mehrle A."/>
            <person name="Schuster C."/>
            <person name="Bahr A."/>
            <person name="Bloecker H."/>
            <person name="Heubner D."/>
            <person name="Hoerlein A."/>
            <person name="Michel G."/>
            <person name="Wedler H."/>
            <person name="Koehrer K."/>
            <person name="Ottenwaelder B."/>
            <person name="Poustka A."/>
            <person name="Wiemann S."/>
            <person name="Schupp I."/>
        </authorList>
    </citation>
    <scope>NUCLEOTIDE SEQUENCE [LARGE SCALE MRNA] OF 80-303 (ISOFORM 2)</scope>
    <source>
        <tissue>Amygdala</tissue>
    </source>
</reference>
<dbReference type="EMBL" id="AF039568">
    <property type="protein sequence ID" value="AAD02171.1"/>
    <property type="molecule type" value="mRNA"/>
</dbReference>
<dbReference type="EMBL" id="AK292856">
    <property type="protein sequence ID" value="BAF85545.1"/>
    <property type="molecule type" value="mRNA"/>
</dbReference>
<dbReference type="EMBL" id="AY359041">
    <property type="protein sequence ID" value="AAQ89400.1"/>
    <property type="molecule type" value="mRNA"/>
</dbReference>
<dbReference type="EMBL" id="CH471055">
    <property type="protein sequence ID" value="EAW64653.1"/>
    <property type="molecule type" value="Genomic_DNA"/>
</dbReference>
<dbReference type="EMBL" id="CH471055">
    <property type="protein sequence ID" value="EAW64654.1"/>
    <property type="molecule type" value="Genomic_DNA"/>
</dbReference>
<dbReference type="EMBL" id="BC006178">
    <property type="protein sequence ID" value="AAH06178.1"/>
    <property type="molecule type" value="mRNA"/>
</dbReference>
<dbReference type="EMBL" id="BC018437">
    <property type="protein sequence ID" value="AAH18437.1"/>
    <property type="molecule type" value="mRNA"/>
</dbReference>
<dbReference type="EMBL" id="CR749670">
    <property type="protein sequence ID" value="CAH18461.1"/>
    <property type="molecule type" value="mRNA"/>
</dbReference>
<dbReference type="CCDS" id="CCDS2699.1">
    <molecule id="Q9BRL7-2"/>
</dbReference>
<dbReference type="CCDS" id="CCDS2700.1">
    <molecule id="Q9BRL7-1"/>
</dbReference>
<dbReference type="CCDS" id="CCDS56246.1">
    <molecule id="Q9BRL7-3"/>
</dbReference>
<dbReference type="PIR" id="JE0157">
    <property type="entry name" value="JE0157"/>
</dbReference>
<dbReference type="RefSeq" id="NP_001188501.1">
    <molecule id="Q9BRL7-2"/>
    <property type="nucleotide sequence ID" value="NM_001201572.2"/>
</dbReference>
<dbReference type="RefSeq" id="NP_001188513.1">
    <molecule id="Q9BRL7-3"/>
    <property type="nucleotide sequence ID" value="NM_001201584.2"/>
</dbReference>
<dbReference type="RefSeq" id="NP_004197.1">
    <molecule id="Q9BRL7-2"/>
    <property type="nucleotide sequence ID" value="NM_004206.4"/>
</dbReference>
<dbReference type="RefSeq" id="NP_116752.1">
    <molecule id="Q9BRL7-1"/>
    <property type="nucleotide sequence ID" value="NM_032970.4"/>
</dbReference>
<dbReference type="RefSeq" id="XP_011532514.1">
    <molecule id="Q9BRL7-1"/>
    <property type="nucleotide sequence ID" value="XM_011534212.3"/>
</dbReference>
<dbReference type="RefSeq" id="XP_024309580.1">
    <molecule id="Q9BRL7-1"/>
    <property type="nucleotide sequence ID" value="XM_024453812.2"/>
</dbReference>
<dbReference type="RefSeq" id="XP_024309582.1">
    <molecule id="Q9BRL7-2"/>
    <property type="nucleotide sequence ID" value="XM_024453814.2"/>
</dbReference>
<dbReference type="RefSeq" id="XP_047305124.1">
    <molecule id="Q9BRL7-1"/>
    <property type="nucleotide sequence ID" value="XM_047449168.1"/>
</dbReference>
<dbReference type="RefSeq" id="XP_047305125.1">
    <molecule id="Q9BRL7-2"/>
    <property type="nucleotide sequence ID" value="XM_047449169.1"/>
</dbReference>
<dbReference type="RefSeq" id="XP_047305126.1">
    <molecule id="Q9BRL7-2"/>
    <property type="nucleotide sequence ID" value="XM_047449170.1"/>
</dbReference>
<dbReference type="RefSeq" id="XP_054204303.1">
    <molecule id="Q9BRL7-1"/>
    <property type="nucleotide sequence ID" value="XM_054348328.1"/>
</dbReference>
<dbReference type="RefSeq" id="XP_054204304.1">
    <molecule id="Q9BRL7-1"/>
    <property type="nucleotide sequence ID" value="XM_054348329.1"/>
</dbReference>
<dbReference type="RefSeq" id="XP_054204305.1">
    <molecule id="Q9BRL7-1"/>
    <property type="nucleotide sequence ID" value="XM_054348330.1"/>
</dbReference>
<dbReference type="RefSeq" id="XP_054204306.1">
    <molecule id="Q9BRL7-2"/>
    <property type="nucleotide sequence ID" value="XM_054348331.1"/>
</dbReference>
<dbReference type="RefSeq" id="XP_054204307.1">
    <molecule id="Q9BRL7-2"/>
    <property type="nucleotide sequence ID" value="XM_054348332.1"/>
</dbReference>
<dbReference type="RefSeq" id="XP_054204308.1">
    <molecule id="Q9BRL7-2"/>
    <property type="nucleotide sequence ID" value="XM_054348333.1"/>
</dbReference>
<dbReference type="SMR" id="Q9BRL7"/>
<dbReference type="BioGRID" id="114565">
    <property type="interactions" value="12"/>
</dbReference>
<dbReference type="FunCoup" id="Q9BRL7">
    <property type="interactions" value="709"/>
</dbReference>
<dbReference type="IntAct" id="Q9BRL7">
    <property type="interactions" value="11"/>
</dbReference>
<dbReference type="MINT" id="Q9BRL7"/>
<dbReference type="STRING" id="9606.ENSP00000264454"/>
<dbReference type="iPTMnet" id="Q9BRL7"/>
<dbReference type="PhosphoSitePlus" id="Q9BRL7"/>
<dbReference type="BioMuta" id="SEC22C"/>
<dbReference type="DMDM" id="74732899"/>
<dbReference type="jPOST" id="Q9BRL7"/>
<dbReference type="MassIVE" id="Q9BRL7"/>
<dbReference type="PaxDb" id="9606-ENSP00000264454"/>
<dbReference type="PeptideAtlas" id="Q9BRL7"/>
<dbReference type="ProteomicsDB" id="78787">
    <molecule id="Q9BRL7-1"/>
</dbReference>
<dbReference type="ProteomicsDB" id="78788">
    <molecule id="Q9BRL7-2"/>
</dbReference>
<dbReference type="ProteomicsDB" id="78789">
    <molecule id="Q9BRL7-3"/>
</dbReference>
<dbReference type="Antibodypedia" id="29226">
    <property type="antibodies" value="38 antibodies from 16 providers"/>
</dbReference>
<dbReference type="DNASU" id="9117"/>
<dbReference type="Ensembl" id="ENST00000264454.8">
    <molecule id="Q9BRL7-1"/>
    <property type="protein sequence ID" value="ENSP00000264454.3"/>
    <property type="gene ID" value="ENSG00000093183.14"/>
</dbReference>
<dbReference type="Ensembl" id="ENST00000273156.11">
    <molecule id="Q9BRL7-2"/>
    <property type="protein sequence ID" value="ENSP00000273156.7"/>
    <property type="gene ID" value="ENSG00000093183.14"/>
</dbReference>
<dbReference type="Ensembl" id="ENST00000417572.5">
    <molecule id="Q9BRL7-2"/>
    <property type="protein sequence ID" value="ENSP00000407564.1"/>
    <property type="gene ID" value="ENSG00000093183.14"/>
</dbReference>
<dbReference type="Ensembl" id="ENST00000423701.6">
    <molecule id="Q9BRL7-3"/>
    <property type="protein sequence ID" value="ENSP00000414576.2"/>
    <property type="gene ID" value="ENSG00000093183.14"/>
</dbReference>
<dbReference type="GeneID" id="9117"/>
<dbReference type="KEGG" id="hsa:9117"/>
<dbReference type="MANE-Select" id="ENST00000264454.8">
    <property type="protein sequence ID" value="ENSP00000264454.3"/>
    <property type="RefSeq nucleotide sequence ID" value="NM_032970.4"/>
    <property type="RefSeq protein sequence ID" value="NP_116752.1"/>
</dbReference>
<dbReference type="UCSC" id="uc003clh.4">
    <molecule id="Q9BRL7-1"/>
    <property type="organism name" value="human"/>
</dbReference>
<dbReference type="AGR" id="HGNC:16828"/>
<dbReference type="CTD" id="9117"/>
<dbReference type="GeneCards" id="SEC22C"/>
<dbReference type="HGNC" id="HGNC:16828">
    <property type="gene designation" value="SEC22C"/>
</dbReference>
<dbReference type="HPA" id="ENSG00000093183">
    <property type="expression patterns" value="Low tissue specificity"/>
</dbReference>
<dbReference type="MIM" id="604028">
    <property type="type" value="gene"/>
</dbReference>
<dbReference type="neXtProt" id="NX_Q9BRL7"/>
<dbReference type="OpenTargets" id="ENSG00000093183"/>
<dbReference type="PharmGKB" id="PA134952972"/>
<dbReference type="VEuPathDB" id="HostDB:ENSG00000093183"/>
<dbReference type="eggNOG" id="KOG0862">
    <property type="taxonomic scope" value="Eukaryota"/>
</dbReference>
<dbReference type="GeneTree" id="ENSGT00940000159338"/>
<dbReference type="InParanoid" id="Q9BRL7"/>
<dbReference type="OMA" id="QDRTNDC"/>
<dbReference type="OrthoDB" id="1719357at2759"/>
<dbReference type="PAN-GO" id="Q9BRL7">
    <property type="GO annotations" value="2 GO annotations based on evolutionary models"/>
</dbReference>
<dbReference type="PhylomeDB" id="Q9BRL7"/>
<dbReference type="TreeFam" id="TF105933"/>
<dbReference type="PathwayCommons" id="Q9BRL7"/>
<dbReference type="Reactome" id="R-HSA-204005">
    <property type="pathway name" value="COPII-mediated vesicle transport"/>
</dbReference>
<dbReference type="SignaLink" id="Q9BRL7"/>
<dbReference type="BioGRID-ORCS" id="9117">
    <property type="hits" value="12 hits in 1155 CRISPR screens"/>
</dbReference>
<dbReference type="ChiTaRS" id="SEC22C">
    <property type="organism name" value="human"/>
</dbReference>
<dbReference type="GenomeRNAi" id="9117"/>
<dbReference type="Pharos" id="Q9BRL7">
    <property type="development level" value="Tdark"/>
</dbReference>
<dbReference type="PRO" id="PR:Q9BRL7"/>
<dbReference type="Proteomes" id="UP000005640">
    <property type="component" value="Chromosome 3"/>
</dbReference>
<dbReference type="RNAct" id="Q9BRL7">
    <property type="molecule type" value="protein"/>
</dbReference>
<dbReference type="Bgee" id="ENSG00000093183">
    <property type="expression patterns" value="Expressed in parotid gland and 183 other cell types or tissues"/>
</dbReference>
<dbReference type="ExpressionAtlas" id="Q9BRL7">
    <property type="expression patterns" value="baseline and differential"/>
</dbReference>
<dbReference type="GO" id="GO:0005783">
    <property type="term" value="C:endoplasmic reticulum"/>
    <property type="evidence" value="ECO:0000304"/>
    <property type="project" value="ProtInc"/>
</dbReference>
<dbReference type="GO" id="GO:0005789">
    <property type="term" value="C:endoplasmic reticulum membrane"/>
    <property type="evidence" value="ECO:0007669"/>
    <property type="project" value="UniProtKB-SubCell"/>
</dbReference>
<dbReference type="GO" id="GO:0016020">
    <property type="term" value="C:membrane"/>
    <property type="evidence" value="ECO:0000304"/>
    <property type="project" value="ProtInc"/>
</dbReference>
<dbReference type="GO" id="GO:0006888">
    <property type="term" value="P:endoplasmic reticulum to Golgi vesicle-mediated transport"/>
    <property type="evidence" value="ECO:0000318"/>
    <property type="project" value="GO_Central"/>
</dbReference>
<dbReference type="GO" id="GO:0015031">
    <property type="term" value="P:protein transport"/>
    <property type="evidence" value="ECO:0007669"/>
    <property type="project" value="UniProtKB-KW"/>
</dbReference>
<dbReference type="CDD" id="cd14824">
    <property type="entry name" value="Longin"/>
    <property type="match status" value="1"/>
</dbReference>
<dbReference type="FunFam" id="3.30.450.50:FF:000012">
    <property type="entry name" value="vesicle-trafficking protein SEC22c isoform X1"/>
    <property type="match status" value="1"/>
</dbReference>
<dbReference type="Gene3D" id="3.30.450.50">
    <property type="entry name" value="Longin domain"/>
    <property type="match status" value="1"/>
</dbReference>
<dbReference type="InterPro" id="IPR011012">
    <property type="entry name" value="Longin-like_dom_sf"/>
</dbReference>
<dbReference type="InterPro" id="IPR010908">
    <property type="entry name" value="Longin_dom"/>
</dbReference>
<dbReference type="InterPro" id="IPR043546">
    <property type="entry name" value="Sec22a/c"/>
</dbReference>
<dbReference type="PANTHER" id="PTHR46258">
    <property type="entry name" value="LONGIN DOMAIN-CONTAINING PROTEIN"/>
    <property type="match status" value="1"/>
</dbReference>
<dbReference type="PANTHER" id="PTHR46258:SF2">
    <property type="entry name" value="VESICLE-TRAFFICKING PROTEIN SEC22C"/>
    <property type="match status" value="1"/>
</dbReference>
<dbReference type="Pfam" id="PF13774">
    <property type="entry name" value="Longin"/>
    <property type="match status" value="1"/>
</dbReference>
<dbReference type="SMART" id="SM01270">
    <property type="entry name" value="Longin"/>
    <property type="match status" value="1"/>
</dbReference>
<dbReference type="SUPFAM" id="SSF64356">
    <property type="entry name" value="SNARE-like"/>
    <property type="match status" value="1"/>
</dbReference>
<dbReference type="PROSITE" id="PS50859">
    <property type="entry name" value="LONGIN"/>
    <property type="match status" value="1"/>
</dbReference>
<comment type="function">
    <text evidence="3">May be involved in vesicle transport between the ER and the Golgi complex.</text>
</comment>
<comment type="interaction">
    <interactant intactId="EBI-10297029">
        <id>Q9BRL7</id>
    </interactant>
    <interactant intactId="EBI-743099">
        <id>Q969F0</id>
        <label>FATE1</label>
    </interactant>
    <organismsDiffer>false</organismsDiffer>
    <experiments>6</experiments>
</comment>
<comment type="interaction">
    <interactant intactId="EBI-10297029">
        <id>Q9BRL7</id>
    </interactant>
    <interactant intactId="EBI-17458373">
        <id>P48165</id>
        <label>GJA8</label>
    </interactant>
    <organismsDiffer>false</organismsDiffer>
    <experiments>3</experiments>
</comment>
<comment type="interaction">
    <interactant intactId="EBI-10297029">
        <id>Q9BRL7</id>
    </interactant>
    <interactant intactId="EBI-2830566">
        <id>Q9H400</id>
        <label>LIME1</label>
    </interactant>
    <organismsDiffer>false</organismsDiffer>
    <experiments>3</experiments>
</comment>
<comment type="interaction">
    <interactant intactId="EBI-10297029">
        <id>Q9BRL7</id>
    </interactant>
    <interactant intactId="EBI-14188237">
        <id>Q8IWY8-3</id>
        <label>ZSCAN29</label>
    </interactant>
    <organismsDiffer>false</organismsDiffer>
    <experiments>3</experiments>
</comment>
<comment type="subcellular location">
    <subcellularLocation>
        <location evidence="3">Endoplasmic reticulum membrane</location>
        <topology evidence="3">Multi-pass membrane protein</topology>
    </subcellularLocation>
</comment>
<comment type="alternative products">
    <event type="alternative splicing"/>
    <isoform>
        <id>Q9BRL7-1</id>
        <name>1</name>
        <sequence type="displayed"/>
    </isoform>
    <isoform>
        <id>Q9BRL7-2</id>
        <name>2</name>
        <sequence type="described" ref="VSP_032163 VSP_032164"/>
    </isoform>
    <isoform>
        <id>Q9BRL7-3</id>
        <name>3</name>
        <sequence type="described" ref="VSP_032161 VSP_032162"/>
    </isoform>
</comment>
<comment type="tissue specificity">
    <text evidence="3">Ubiquitously expressed.</text>
</comment>
<comment type="similarity">
    <text evidence="8">Belongs to the synaptobrevin family.</text>
</comment>
<organism>
    <name type="scientific">Homo sapiens</name>
    <name type="common">Human</name>
    <dbReference type="NCBI Taxonomy" id="9606"/>
    <lineage>
        <taxon>Eukaryota</taxon>
        <taxon>Metazoa</taxon>
        <taxon>Chordata</taxon>
        <taxon>Craniata</taxon>
        <taxon>Vertebrata</taxon>
        <taxon>Euteleostomi</taxon>
        <taxon>Mammalia</taxon>
        <taxon>Eutheria</taxon>
        <taxon>Euarchontoglires</taxon>
        <taxon>Primates</taxon>
        <taxon>Haplorrhini</taxon>
        <taxon>Catarrhini</taxon>
        <taxon>Hominidae</taxon>
        <taxon>Homo</taxon>
    </lineage>
</organism>
<evidence type="ECO:0000255" key="1"/>
<evidence type="ECO:0000255" key="2">
    <source>
        <dbReference type="PROSITE-ProRule" id="PRU00231"/>
    </source>
</evidence>
<evidence type="ECO:0000269" key="3">
    <source>
    </source>
</evidence>
<evidence type="ECO:0000303" key="4">
    <source>
    </source>
</evidence>
<evidence type="ECO:0000303" key="5">
    <source>
    </source>
</evidence>
<evidence type="ECO:0000303" key="6">
    <source>
    </source>
</evidence>
<evidence type="ECO:0000303" key="7">
    <source>
    </source>
</evidence>
<evidence type="ECO:0000305" key="8"/>
<sequence length="303" mass="34269">MSVIFFACVVRVRDGLPLSASTDFYHTQDFLEWRRRLKSLALRLAQYPGRGSAEGCDFSIHFSSFGDVACMAICSCQCPAAMAFCFLETLWWEFTASYDTTCIGLASRPYAFLEFDSIIQKVKWHFNYVSSSQMECSLEKIQEELKLQPPAVLTLEDTDVANGVMNGHTPMHLEPAPNFRMEPVTALGILSLILNIMCAALNLIRGVHLAEHSLQVAHEEIGNILAFLVPFVACIFQCYLYLFYSPARTMKVVLMLLFICLGNMYLHGLRNLWQILFHIGVAFLSSYQILTRQLQEKQSDCGV</sequence>
<proteinExistence type="evidence at protein level"/>
<feature type="chain" id="PRO_0000324161" description="Vesicle-trafficking protein SEC22c">
    <location>
        <begin position="1"/>
        <end position="303"/>
    </location>
</feature>
<feature type="topological domain" description="Cytoplasmic" evidence="1">
    <location>
        <begin position="1"/>
        <end position="183"/>
    </location>
</feature>
<feature type="transmembrane region" description="Helical" evidence="1">
    <location>
        <begin position="184"/>
        <end position="204"/>
    </location>
</feature>
<feature type="topological domain" description="Lumenal" evidence="1">
    <location>
        <begin position="205"/>
        <end position="223"/>
    </location>
</feature>
<feature type="transmembrane region" description="Helical" evidence="1">
    <location>
        <begin position="224"/>
        <end position="244"/>
    </location>
</feature>
<feature type="topological domain" description="Cytoplasmic" evidence="1">
    <location>
        <begin position="245"/>
        <end position="248"/>
    </location>
</feature>
<feature type="transmembrane region" description="Helical" evidence="1">
    <location>
        <begin position="249"/>
        <end position="269"/>
    </location>
</feature>
<feature type="topological domain" description="Lumenal" evidence="1">
    <location>
        <position position="270"/>
    </location>
</feature>
<feature type="transmembrane region" description="Helical" evidence="1">
    <location>
        <begin position="271"/>
        <end position="291"/>
    </location>
</feature>
<feature type="topological domain" description="Cytoplasmic" evidence="1">
    <location>
        <begin position="292"/>
        <end position="303"/>
    </location>
</feature>
<feature type="domain" description="Longin" evidence="2">
    <location>
        <begin position="8"/>
        <end position="119"/>
    </location>
</feature>
<feature type="splice variant" id="VSP_032161" description="In isoform 3." evidence="4">
    <original>VAHEEIGNILAFL</original>
    <variation>DPRSWFCWLDQTS</variation>
    <location>
        <begin position="216"/>
        <end position="228"/>
    </location>
</feature>
<feature type="splice variant" id="VSP_032162" description="In isoform 3." evidence="4">
    <location>
        <begin position="229"/>
        <end position="303"/>
    </location>
</feature>
<feature type="splice variant" id="VSP_032163" description="In isoform 2." evidence="5 6 7">
    <original>CYLYLFYSPARTM</original>
    <variation>DPRSWFCWLDQTS</variation>
    <location>
        <begin position="238"/>
        <end position="250"/>
    </location>
</feature>
<feature type="splice variant" id="VSP_032164" description="In isoform 2." evidence="5 6 7">
    <location>
        <begin position="251"/>
        <end position="303"/>
    </location>
</feature>
<accession>Q9BRL7</accession>
<accession>O95152</accession>
<accession>Q68CX3</accession>
<accession>Q6UW18</accession>
<gene>
    <name type="primary">SEC22C</name>
    <name type="synonym">SEC22L3</name>
    <name type="ORF">UNQ459/PRO784</name>
</gene>
<protein>
    <recommendedName>
        <fullName>Vesicle-trafficking protein SEC22c</fullName>
    </recommendedName>
    <alternativeName>
        <fullName>SEC22 vesicle-trafficking protein homolog C</fullName>
    </alternativeName>
    <alternativeName>
        <fullName>SEC22 vesicle-trafficking protein-like 3</fullName>
    </alternativeName>
</protein>
<name>SC22C_HUMAN</name>